<dbReference type="EMBL" id="CP000113">
    <property type="protein sequence ID" value="ABF86378.1"/>
    <property type="molecule type" value="Genomic_DNA"/>
</dbReference>
<dbReference type="RefSeq" id="WP_011554882.1">
    <property type="nucleotide sequence ID" value="NC_008095.1"/>
</dbReference>
<dbReference type="SMR" id="Q1D2R5"/>
<dbReference type="STRING" id="246197.MXAN_4901"/>
<dbReference type="EnsemblBacteria" id="ABF86378">
    <property type="protein sequence ID" value="ABF86378"/>
    <property type="gene ID" value="MXAN_4901"/>
</dbReference>
<dbReference type="GeneID" id="41362191"/>
<dbReference type="KEGG" id="mxa:MXAN_4901"/>
<dbReference type="eggNOG" id="COG1196">
    <property type="taxonomic scope" value="Bacteria"/>
</dbReference>
<dbReference type="HOGENOM" id="CLU_001042_2_2_7"/>
<dbReference type="OrthoDB" id="9808768at2"/>
<dbReference type="Proteomes" id="UP000002402">
    <property type="component" value="Chromosome"/>
</dbReference>
<dbReference type="GO" id="GO:0005694">
    <property type="term" value="C:chromosome"/>
    <property type="evidence" value="ECO:0007669"/>
    <property type="project" value="InterPro"/>
</dbReference>
<dbReference type="GO" id="GO:0005737">
    <property type="term" value="C:cytoplasm"/>
    <property type="evidence" value="ECO:0007669"/>
    <property type="project" value="UniProtKB-SubCell"/>
</dbReference>
<dbReference type="GO" id="GO:0005524">
    <property type="term" value="F:ATP binding"/>
    <property type="evidence" value="ECO:0007669"/>
    <property type="project" value="UniProtKB-UniRule"/>
</dbReference>
<dbReference type="GO" id="GO:0016887">
    <property type="term" value="F:ATP hydrolysis activity"/>
    <property type="evidence" value="ECO:0007669"/>
    <property type="project" value="InterPro"/>
</dbReference>
<dbReference type="GO" id="GO:0003677">
    <property type="term" value="F:DNA binding"/>
    <property type="evidence" value="ECO:0007669"/>
    <property type="project" value="UniProtKB-UniRule"/>
</dbReference>
<dbReference type="GO" id="GO:0030261">
    <property type="term" value="P:chromosome condensation"/>
    <property type="evidence" value="ECO:0007669"/>
    <property type="project" value="InterPro"/>
</dbReference>
<dbReference type="GO" id="GO:0007059">
    <property type="term" value="P:chromosome segregation"/>
    <property type="evidence" value="ECO:0007669"/>
    <property type="project" value="UniProtKB-UniRule"/>
</dbReference>
<dbReference type="GO" id="GO:0006260">
    <property type="term" value="P:DNA replication"/>
    <property type="evidence" value="ECO:0007669"/>
    <property type="project" value="UniProtKB-UniRule"/>
</dbReference>
<dbReference type="GO" id="GO:0007062">
    <property type="term" value="P:sister chromatid cohesion"/>
    <property type="evidence" value="ECO:0007669"/>
    <property type="project" value="InterPro"/>
</dbReference>
<dbReference type="CDD" id="cd03278">
    <property type="entry name" value="ABC_SMC_barmotin"/>
    <property type="match status" value="1"/>
</dbReference>
<dbReference type="FunFam" id="3.40.50.300:FF:000901">
    <property type="entry name" value="Chromosome partition protein Smc"/>
    <property type="match status" value="1"/>
</dbReference>
<dbReference type="Gene3D" id="1.20.1060.20">
    <property type="match status" value="1"/>
</dbReference>
<dbReference type="Gene3D" id="3.30.70.1620">
    <property type="match status" value="1"/>
</dbReference>
<dbReference type="Gene3D" id="3.40.50.300">
    <property type="entry name" value="P-loop containing nucleotide triphosphate hydrolases"/>
    <property type="match status" value="2"/>
</dbReference>
<dbReference type="HAMAP" id="MF_01894">
    <property type="entry name" value="Smc_prok"/>
    <property type="match status" value="1"/>
</dbReference>
<dbReference type="InterPro" id="IPR027417">
    <property type="entry name" value="P-loop_NTPase"/>
</dbReference>
<dbReference type="InterPro" id="IPR003395">
    <property type="entry name" value="RecF/RecN/SMC_N"/>
</dbReference>
<dbReference type="InterPro" id="IPR024704">
    <property type="entry name" value="SMC"/>
</dbReference>
<dbReference type="InterPro" id="IPR010935">
    <property type="entry name" value="SMC_hinge"/>
</dbReference>
<dbReference type="InterPro" id="IPR036277">
    <property type="entry name" value="SMC_hinge_sf"/>
</dbReference>
<dbReference type="InterPro" id="IPR011890">
    <property type="entry name" value="SMC_prok"/>
</dbReference>
<dbReference type="NCBIfam" id="TIGR02168">
    <property type="entry name" value="SMC_prok_B"/>
    <property type="match status" value="1"/>
</dbReference>
<dbReference type="PANTHER" id="PTHR43977">
    <property type="entry name" value="STRUCTURAL MAINTENANCE OF CHROMOSOMES PROTEIN 3"/>
    <property type="match status" value="1"/>
</dbReference>
<dbReference type="Pfam" id="PF06470">
    <property type="entry name" value="SMC_hinge"/>
    <property type="match status" value="1"/>
</dbReference>
<dbReference type="Pfam" id="PF02463">
    <property type="entry name" value="SMC_N"/>
    <property type="match status" value="1"/>
</dbReference>
<dbReference type="PIRSF" id="PIRSF005719">
    <property type="entry name" value="SMC"/>
    <property type="match status" value="1"/>
</dbReference>
<dbReference type="SMART" id="SM00968">
    <property type="entry name" value="SMC_hinge"/>
    <property type="match status" value="1"/>
</dbReference>
<dbReference type="SUPFAM" id="SSF52540">
    <property type="entry name" value="P-loop containing nucleoside triphosphate hydrolases"/>
    <property type="match status" value="1"/>
</dbReference>
<dbReference type="SUPFAM" id="SSF75553">
    <property type="entry name" value="Smc hinge domain"/>
    <property type="match status" value="1"/>
</dbReference>
<name>SMC_MYXXD</name>
<feature type="chain" id="PRO_0000460332" description="Chromosome partition protein Smc">
    <location>
        <begin position="1"/>
        <end position="1200"/>
    </location>
</feature>
<feature type="domain" description="SMC hinge" evidence="1">
    <location>
        <begin position="528"/>
        <end position="644"/>
    </location>
</feature>
<feature type="region of interest" description="Disordered" evidence="3">
    <location>
        <begin position="763"/>
        <end position="795"/>
    </location>
</feature>
<feature type="coiled-coil region" evidence="2">
    <location>
        <begin position="171"/>
        <end position="219"/>
    </location>
</feature>
<feature type="coiled-coil region" evidence="2">
    <location>
        <begin position="252"/>
        <end position="342"/>
    </location>
</feature>
<feature type="coiled-coil region" evidence="2">
    <location>
        <begin position="679"/>
        <end position="706"/>
    </location>
</feature>
<feature type="coiled-coil region" evidence="2">
    <location>
        <begin position="735"/>
        <end position="762"/>
    </location>
</feature>
<feature type="coiled-coil region" evidence="2">
    <location>
        <begin position="1002"/>
        <end position="1039"/>
    </location>
</feature>
<feature type="compositionally biased region" description="Basic and acidic residues" evidence="3">
    <location>
        <begin position="772"/>
        <end position="795"/>
    </location>
</feature>
<feature type="binding site" evidence="2">
    <location>
        <begin position="32"/>
        <end position="39"/>
    </location>
    <ligand>
        <name>ATP</name>
        <dbReference type="ChEBI" id="CHEBI:30616"/>
    </ligand>
</feature>
<sequence length="1200" mass="133397">MRIKRLDITGFKSFMERSVFTFDEGVTGIVGPNGCGKSNVVDAIRWVMGEQSAKNLRGRGMEDVIFNGSENKPPLSMAEVSLTFIVDDTDQLAPQYQGFSEVTVTRRLFRNGDSEYLINKTLCRLLDITELFLGTGVGTKAYSIIEQGRVGLIVSSKPEDRRHLLEEAAGVTKYKARRKAAERKMEATDANLLRVTDITNELEKRLDALSRQAKKAEKYKKLKARMRDIDLHAATHRQLELMAEKKMLQSRLENLGSEERESLDRVKELEETITRRRTELEAETAALQALAAEVHTLESSLQRDTQEMTYGKRDLEETRARVAAAQVELDGLLARKAEMSEAMAAREAELSGIAGSWKEDEVAMQVAQEELRRVSQLQTEVALRLEQERAGLVAVATRLANHESNLVNLARQRGDLGARRAKLQGELETLRAQEQTLENVRGDVAKRVEDTRHLAAELAERKGQEEDALTRTRAAFTENEIEVIALREELSDKRSRLSTLEDIQKNYDGFDRGVRAVMTRAGVQAREQGIFGLVADVINVTPRYERAVEAALGERLQHVIVESRDKGVELVDYLKGHAEGRGSFLPVPALDTLPAPLEPDFSQPGVLAHALREVTCEEALTPLVQLLLGDVVIVQDVATARAWTESGGPACTLVTVEGEVFRPDGTIVGGESEGAAVGALQKKREIAELATEVARVEERYNEILTRHYTLQKQMGHAEGVLKGLAKNQHAEELNLASQEKDLHKAGEDLARVRERVRALEVEEGQLTQSHQALEHEEEASRGEVAHGQADREGREERVKQLVSEQESLRLRAETANGELTGLRIKVAAGSERGESARKELDSLVSQRQDMETRITRLQATVVEGGARVEELARRTTDTEGGLSQRAEEHRLAAEGLEARRAAHTTASAEVREQDATFRELRGRVDELMQGLSQISLREREIALELEHLAAGIRERHQVELANELHKYHMLAALAPETEAELKDLRAQVEKMGEINLTAIDEHAELSKRYDFLTAQKKDLQSSIEQLKEAIQRIDATSRERFKQTFDVVNEKFQAIFPRLFGGGRASLILTNEGPGGEPGVEIVAQPPGKKLQSVNLLSGGEKALTAVGLIFGIFLIKPTPFCLLDEVDAPLDEGNVGRYNDMVKEMSKQSQFILITHNKRTMEVSNTLYGVTMEEPGISKLVSVRMREAGAANDDKVTAA</sequence>
<organism>
    <name type="scientific">Myxococcus xanthus (strain DK1622)</name>
    <dbReference type="NCBI Taxonomy" id="246197"/>
    <lineage>
        <taxon>Bacteria</taxon>
        <taxon>Pseudomonadati</taxon>
        <taxon>Myxococcota</taxon>
        <taxon>Myxococcia</taxon>
        <taxon>Myxococcales</taxon>
        <taxon>Cystobacterineae</taxon>
        <taxon>Myxococcaceae</taxon>
        <taxon>Myxococcus</taxon>
    </lineage>
</organism>
<comment type="function">
    <text evidence="2 4">A conditionally essential component of the chromosome segregation machinery (PubMed:32738827). Required for chromosome condensation and partitioning (PubMed:32738827). Important for positioning of ParB-parS complexes (ori of replication) and of the ter replication site, as well as for segration of the ParB-parS complex and thus chromosome segregation (PubMed:32738827). May act via the formation of a condensin-like complex containing Smc, ScpA and ScpB that pulls DNA away from mid-cell into both cell halves (Probable).</text>
</comment>
<comment type="subunit">
    <text evidence="2 6">Homodimer. Probably forms the Structural Maintenance of Chromosome (SMC) condensin-like complex with ScpA and ScpB (Probable) (PubMed:32738827).</text>
</comment>
<comment type="subcellular location">
    <subcellularLocation>
        <location evidence="2 4">Cytoplasm</location>
    </subcellularLocation>
    <text evidence="4">Forms 1 to 6 dynamic foci per cell over the nucleoid; in a double scpA-scpB deletion no foci are seen (PubMed:32738827). Requires parB but not scpAB to stably accumulate (PubMed:32738827).</text>
</comment>
<comment type="domain">
    <text evidence="2">Contains large globular domains required for ATP hydrolysis at each terminus and a third globular domain forming a flexible hinge near the middle of the molecule. These domains are separated by coiled-coil structures.</text>
</comment>
<comment type="disruption phenotype">
    <text evidence="4">Conditionally essential, the primary defect in an in-frame deletion mutant is in chromosome segregation and organization. Cells are temperature-sensitive; they grow slower than wild-type at 25 and very poorly at 32 degrees Celsius (PubMed:32738827). Increased sensitivity to DNA gyrase inhibitor novobiocin, cells are longer, and contain 2 fully replicated chromosomes that are not completely segregated (PubMed:32738827). ParA, PadC and bactofilin BacP are less organized than in wild-type (PubMed:32738827). All these phenotypes are stronger at 32 degrees Celsius (PubMed:32738827). Synthetically lethal with padC or triple bacNOP deletions (PubMed:32738827).</text>
</comment>
<comment type="similarity">
    <text evidence="2">Belongs to the SMC family.</text>
</comment>
<accession>Q1D2R5</accession>
<protein>
    <recommendedName>
        <fullName evidence="2 5">Chromosome partition protein Smc</fullName>
    </recommendedName>
</protein>
<gene>
    <name evidence="2 5" type="primary">smc</name>
    <name evidence="7" type="ordered locus">MXAN_4901</name>
</gene>
<reference evidence="7" key="1">
    <citation type="journal article" date="2006" name="Proc. Natl. Acad. Sci. U.S.A.">
        <title>Evolution of sensory complexity recorded in a myxobacterial genome.</title>
        <authorList>
            <person name="Goldman B.S."/>
            <person name="Nierman W.C."/>
            <person name="Kaiser D."/>
            <person name="Slater S.C."/>
            <person name="Durkin A.S."/>
            <person name="Eisen J.A."/>
            <person name="Ronning C.M."/>
            <person name="Barbazuk W.B."/>
            <person name="Blanchard M."/>
            <person name="Field C."/>
            <person name="Halling C."/>
            <person name="Hinkle G."/>
            <person name="Iartchuk O."/>
            <person name="Kim H.S."/>
            <person name="Mackenzie C."/>
            <person name="Madupu R."/>
            <person name="Miller N."/>
            <person name="Shvartsbeyn A."/>
            <person name="Sullivan S.A."/>
            <person name="Vaudin M."/>
            <person name="Wiegand R."/>
            <person name="Kaplan H.B."/>
        </authorList>
    </citation>
    <scope>NUCLEOTIDE SEQUENCE [LARGE SCALE GENOMIC DNA]</scope>
    <source>
        <strain>DK1622</strain>
    </source>
</reference>
<reference key="2">
    <citation type="journal article" date="2020" name="Mol. Microbiol.">
        <title>SMC and the bactofilin/PadC scaffold have distinct yet redundant functions in chromosome segregation and organization in Myxococcus xanthus.</title>
        <authorList>
            <person name="Anand D."/>
            <person name="Schumacher D."/>
            <person name="Soegaard-Andersen L."/>
        </authorList>
    </citation>
    <scope>FUNCTION</scope>
    <scope>PROBABLE SUBUNIT</scope>
    <scope>SUBCELLULAR LOCATION</scope>
    <scope>DISRUPTION PHENOTYPE</scope>
    <source>
        <strain>DK1622</strain>
    </source>
</reference>
<evidence type="ECO:0000255" key="1"/>
<evidence type="ECO:0000255" key="2">
    <source>
        <dbReference type="HAMAP-Rule" id="MF_01894"/>
    </source>
</evidence>
<evidence type="ECO:0000256" key="3">
    <source>
        <dbReference type="SAM" id="MobiDB-lite"/>
    </source>
</evidence>
<evidence type="ECO:0000269" key="4">
    <source>
    </source>
</evidence>
<evidence type="ECO:0000303" key="5">
    <source>
    </source>
</evidence>
<evidence type="ECO:0000305" key="6">
    <source>
    </source>
</evidence>
<evidence type="ECO:0000312" key="7">
    <source>
        <dbReference type="EMBL" id="ABF86378.1"/>
    </source>
</evidence>
<keyword id="KW-0067">ATP-binding</keyword>
<keyword id="KW-0159">Chromosome partition</keyword>
<keyword id="KW-0175">Coiled coil</keyword>
<keyword id="KW-0963">Cytoplasm</keyword>
<keyword id="KW-0238">DNA-binding</keyword>
<keyword id="KW-0547">Nucleotide-binding</keyword>
<keyword id="KW-1185">Reference proteome</keyword>
<proteinExistence type="evidence at protein level"/>